<dbReference type="EC" id="2.8.4.3" evidence="1"/>
<dbReference type="EMBL" id="CP000444">
    <property type="protein sequence ID" value="ABI42068.1"/>
    <property type="molecule type" value="Genomic_DNA"/>
</dbReference>
<dbReference type="SMR" id="Q0HXT7"/>
<dbReference type="KEGG" id="shm:Shewmr7_1069"/>
<dbReference type="HOGENOM" id="CLU_018697_2_0_6"/>
<dbReference type="GO" id="GO:0005829">
    <property type="term" value="C:cytosol"/>
    <property type="evidence" value="ECO:0007669"/>
    <property type="project" value="TreeGrafter"/>
</dbReference>
<dbReference type="GO" id="GO:0051539">
    <property type="term" value="F:4 iron, 4 sulfur cluster binding"/>
    <property type="evidence" value="ECO:0007669"/>
    <property type="project" value="UniProtKB-UniRule"/>
</dbReference>
<dbReference type="GO" id="GO:0046872">
    <property type="term" value="F:metal ion binding"/>
    <property type="evidence" value="ECO:0007669"/>
    <property type="project" value="UniProtKB-KW"/>
</dbReference>
<dbReference type="GO" id="GO:0035597">
    <property type="term" value="F:N6-isopentenyladenosine methylthiotransferase activity"/>
    <property type="evidence" value="ECO:0007669"/>
    <property type="project" value="TreeGrafter"/>
</dbReference>
<dbReference type="CDD" id="cd01335">
    <property type="entry name" value="Radical_SAM"/>
    <property type="match status" value="1"/>
</dbReference>
<dbReference type="FunFam" id="3.40.50.12160:FF:000001">
    <property type="entry name" value="tRNA-2-methylthio-N(6)-dimethylallyladenosine synthase"/>
    <property type="match status" value="1"/>
</dbReference>
<dbReference type="FunFam" id="3.80.30.20:FF:000001">
    <property type="entry name" value="tRNA-2-methylthio-N(6)-dimethylallyladenosine synthase 2"/>
    <property type="match status" value="1"/>
</dbReference>
<dbReference type="Gene3D" id="3.40.50.12160">
    <property type="entry name" value="Methylthiotransferase, N-terminal domain"/>
    <property type="match status" value="1"/>
</dbReference>
<dbReference type="Gene3D" id="3.80.30.20">
    <property type="entry name" value="tm_1862 like domain"/>
    <property type="match status" value="1"/>
</dbReference>
<dbReference type="HAMAP" id="MF_01864">
    <property type="entry name" value="tRNA_metthiotr_MiaB"/>
    <property type="match status" value="1"/>
</dbReference>
<dbReference type="InterPro" id="IPR006638">
    <property type="entry name" value="Elp3/MiaA/NifB-like_rSAM"/>
</dbReference>
<dbReference type="InterPro" id="IPR005839">
    <property type="entry name" value="Methylthiotransferase"/>
</dbReference>
<dbReference type="InterPro" id="IPR020612">
    <property type="entry name" value="Methylthiotransferase_CS"/>
</dbReference>
<dbReference type="InterPro" id="IPR013848">
    <property type="entry name" value="Methylthiotransferase_N"/>
</dbReference>
<dbReference type="InterPro" id="IPR038135">
    <property type="entry name" value="Methylthiotransferase_N_sf"/>
</dbReference>
<dbReference type="InterPro" id="IPR006463">
    <property type="entry name" value="MiaB_methiolase"/>
</dbReference>
<dbReference type="InterPro" id="IPR007197">
    <property type="entry name" value="rSAM"/>
</dbReference>
<dbReference type="InterPro" id="IPR023404">
    <property type="entry name" value="rSAM_horseshoe"/>
</dbReference>
<dbReference type="InterPro" id="IPR002792">
    <property type="entry name" value="TRAM_dom"/>
</dbReference>
<dbReference type="NCBIfam" id="TIGR01574">
    <property type="entry name" value="miaB-methiolase"/>
    <property type="match status" value="1"/>
</dbReference>
<dbReference type="NCBIfam" id="TIGR00089">
    <property type="entry name" value="MiaB/RimO family radical SAM methylthiotransferase"/>
    <property type="match status" value="1"/>
</dbReference>
<dbReference type="PANTHER" id="PTHR43020">
    <property type="entry name" value="CDK5 REGULATORY SUBUNIT-ASSOCIATED PROTEIN 1"/>
    <property type="match status" value="1"/>
</dbReference>
<dbReference type="PANTHER" id="PTHR43020:SF2">
    <property type="entry name" value="MITOCHONDRIAL TRNA METHYLTHIOTRANSFERASE CDK5RAP1"/>
    <property type="match status" value="1"/>
</dbReference>
<dbReference type="Pfam" id="PF04055">
    <property type="entry name" value="Radical_SAM"/>
    <property type="match status" value="1"/>
</dbReference>
<dbReference type="Pfam" id="PF01938">
    <property type="entry name" value="TRAM"/>
    <property type="match status" value="1"/>
</dbReference>
<dbReference type="Pfam" id="PF00919">
    <property type="entry name" value="UPF0004"/>
    <property type="match status" value="1"/>
</dbReference>
<dbReference type="SFLD" id="SFLDF00273">
    <property type="entry name" value="(dimethylallyl)adenosine_tRNA"/>
    <property type="match status" value="1"/>
</dbReference>
<dbReference type="SFLD" id="SFLDG01082">
    <property type="entry name" value="B12-binding_domain_containing"/>
    <property type="match status" value="1"/>
</dbReference>
<dbReference type="SFLD" id="SFLDS00029">
    <property type="entry name" value="Radical_SAM"/>
    <property type="match status" value="1"/>
</dbReference>
<dbReference type="SMART" id="SM00729">
    <property type="entry name" value="Elp3"/>
    <property type="match status" value="1"/>
</dbReference>
<dbReference type="SUPFAM" id="SSF102114">
    <property type="entry name" value="Radical SAM enzymes"/>
    <property type="match status" value="1"/>
</dbReference>
<dbReference type="PROSITE" id="PS51449">
    <property type="entry name" value="MTTASE_N"/>
    <property type="match status" value="1"/>
</dbReference>
<dbReference type="PROSITE" id="PS01278">
    <property type="entry name" value="MTTASE_RADICAL"/>
    <property type="match status" value="1"/>
</dbReference>
<dbReference type="PROSITE" id="PS51918">
    <property type="entry name" value="RADICAL_SAM"/>
    <property type="match status" value="1"/>
</dbReference>
<dbReference type="PROSITE" id="PS50926">
    <property type="entry name" value="TRAM"/>
    <property type="match status" value="1"/>
</dbReference>
<reference key="1">
    <citation type="submission" date="2006-08" db="EMBL/GenBank/DDBJ databases">
        <title>Complete sequence of chromosome 1 of Shewanella sp. MR-7.</title>
        <authorList>
            <person name="Copeland A."/>
            <person name="Lucas S."/>
            <person name="Lapidus A."/>
            <person name="Barry K."/>
            <person name="Detter J.C."/>
            <person name="Glavina del Rio T."/>
            <person name="Hammon N."/>
            <person name="Israni S."/>
            <person name="Dalin E."/>
            <person name="Tice H."/>
            <person name="Pitluck S."/>
            <person name="Kiss H."/>
            <person name="Brettin T."/>
            <person name="Bruce D."/>
            <person name="Han C."/>
            <person name="Tapia R."/>
            <person name="Gilna P."/>
            <person name="Schmutz J."/>
            <person name="Larimer F."/>
            <person name="Land M."/>
            <person name="Hauser L."/>
            <person name="Kyrpides N."/>
            <person name="Mikhailova N."/>
            <person name="Nealson K."/>
            <person name="Konstantinidis K."/>
            <person name="Klappenbach J."/>
            <person name="Tiedje J."/>
            <person name="Richardson P."/>
        </authorList>
    </citation>
    <scope>NUCLEOTIDE SEQUENCE [LARGE SCALE GENOMIC DNA]</scope>
    <source>
        <strain>MR-7</strain>
    </source>
</reference>
<protein>
    <recommendedName>
        <fullName evidence="1">tRNA-2-methylthio-N(6)-dimethylallyladenosine synthase</fullName>
        <ecNumber evidence="1">2.8.4.3</ecNumber>
    </recommendedName>
    <alternativeName>
        <fullName evidence="1">(Dimethylallyl)adenosine tRNA methylthiotransferase MiaB</fullName>
    </alternativeName>
    <alternativeName>
        <fullName evidence="1">tRNA-i(6)A37 methylthiotransferase</fullName>
    </alternativeName>
</protein>
<gene>
    <name evidence="1" type="primary">miaB</name>
    <name type="ordered locus">Shewmr7_1069</name>
</gene>
<organism>
    <name type="scientific">Shewanella sp. (strain MR-7)</name>
    <dbReference type="NCBI Taxonomy" id="60481"/>
    <lineage>
        <taxon>Bacteria</taxon>
        <taxon>Pseudomonadati</taxon>
        <taxon>Pseudomonadota</taxon>
        <taxon>Gammaproteobacteria</taxon>
        <taxon>Alteromonadales</taxon>
        <taxon>Shewanellaceae</taxon>
        <taxon>Shewanella</taxon>
    </lineage>
</organism>
<sequence>MSKKLHIKTWGCQMNEYDSSKMADLLGEYQGYTLTEEAEEADILLLNTCSIREKAQEKVFHQLGRWKTLKDKNPDLIIGVGGCVASQEGKAIKDRAHCVDIIFGPQTLHRLPDMIEQVRRGEKAVIDVSFPEIEKFDRLPEPRAEGPTAFVSIMEGCSKYCSFCVVPYTRGEEVSRPSDDIILEIAQLAEQGVREVNLLGQNVNAYRGATHDGGICTFAELLRYVAAIDGIDRIRFTTSHPIEFTQDIIDVYEDTPELVSFLHLPVQSGSDRILTAMKRGHMAIEYKSIIRRLRKARPDIQISSDFIIGFPGETKEDFADTMKLIEDVAFDHSFSFIYSARPGTPAADLPDDVDMEEKKQRLAILQDRITQQAMRYSRHMMGTVQRILVEGPSVKNPMELRGRTENNRVVNFEGQPKHIGSFVDVEIVDVYTNSLRGKFIRGEDEMDLRRNLRPSDILAKHKQDDDLGVTQFKP</sequence>
<feature type="chain" id="PRO_0000374547" description="tRNA-2-methylthio-N(6)-dimethylallyladenosine synthase">
    <location>
        <begin position="1"/>
        <end position="474"/>
    </location>
</feature>
<feature type="domain" description="MTTase N-terminal" evidence="1">
    <location>
        <begin position="3"/>
        <end position="120"/>
    </location>
</feature>
<feature type="domain" description="Radical SAM core" evidence="2">
    <location>
        <begin position="143"/>
        <end position="375"/>
    </location>
</feature>
<feature type="domain" description="TRAM" evidence="1">
    <location>
        <begin position="378"/>
        <end position="441"/>
    </location>
</feature>
<feature type="binding site" evidence="1">
    <location>
        <position position="12"/>
    </location>
    <ligand>
        <name>[4Fe-4S] cluster</name>
        <dbReference type="ChEBI" id="CHEBI:49883"/>
        <label>1</label>
    </ligand>
</feature>
<feature type="binding site" evidence="1">
    <location>
        <position position="49"/>
    </location>
    <ligand>
        <name>[4Fe-4S] cluster</name>
        <dbReference type="ChEBI" id="CHEBI:49883"/>
        <label>1</label>
    </ligand>
</feature>
<feature type="binding site" evidence="1">
    <location>
        <position position="83"/>
    </location>
    <ligand>
        <name>[4Fe-4S] cluster</name>
        <dbReference type="ChEBI" id="CHEBI:49883"/>
        <label>1</label>
    </ligand>
</feature>
<feature type="binding site" evidence="1">
    <location>
        <position position="157"/>
    </location>
    <ligand>
        <name>[4Fe-4S] cluster</name>
        <dbReference type="ChEBI" id="CHEBI:49883"/>
        <label>2</label>
        <note>4Fe-4S-S-AdoMet</note>
    </ligand>
</feature>
<feature type="binding site" evidence="1">
    <location>
        <position position="161"/>
    </location>
    <ligand>
        <name>[4Fe-4S] cluster</name>
        <dbReference type="ChEBI" id="CHEBI:49883"/>
        <label>2</label>
        <note>4Fe-4S-S-AdoMet</note>
    </ligand>
</feature>
<feature type="binding site" evidence="1">
    <location>
        <position position="164"/>
    </location>
    <ligand>
        <name>[4Fe-4S] cluster</name>
        <dbReference type="ChEBI" id="CHEBI:49883"/>
        <label>2</label>
        <note>4Fe-4S-S-AdoMet</note>
    </ligand>
</feature>
<accession>Q0HXT7</accession>
<proteinExistence type="inferred from homology"/>
<name>MIAB_SHESR</name>
<keyword id="KW-0004">4Fe-4S</keyword>
<keyword id="KW-0963">Cytoplasm</keyword>
<keyword id="KW-0408">Iron</keyword>
<keyword id="KW-0411">Iron-sulfur</keyword>
<keyword id="KW-0479">Metal-binding</keyword>
<keyword id="KW-0949">S-adenosyl-L-methionine</keyword>
<keyword id="KW-0808">Transferase</keyword>
<keyword id="KW-0819">tRNA processing</keyword>
<comment type="function">
    <text evidence="1">Catalyzes the methylthiolation of N6-(dimethylallyl)adenosine (i(6)A), leading to the formation of 2-methylthio-N6-(dimethylallyl)adenosine (ms(2)i(6)A) at position 37 in tRNAs that read codons beginning with uridine.</text>
</comment>
<comment type="catalytic activity">
    <reaction evidence="1">
        <text>N(6)-dimethylallyladenosine(37) in tRNA + (sulfur carrier)-SH + AH2 + 2 S-adenosyl-L-methionine = 2-methylsulfanyl-N(6)-dimethylallyladenosine(37) in tRNA + (sulfur carrier)-H + 5'-deoxyadenosine + L-methionine + A + S-adenosyl-L-homocysteine + 2 H(+)</text>
        <dbReference type="Rhea" id="RHEA:37067"/>
        <dbReference type="Rhea" id="RHEA-COMP:10375"/>
        <dbReference type="Rhea" id="RHEA-COMP:10376"/>
        <dbReference type="Rhea" id="RHEA-COMP:14737"/>
        <dbReference type="Rhea" id="RHEA-COMP:14739"/>
        <dbReference type="ChEBI" id="CHEBI:13193"/>
        <dbReference type="ChEBI" id="CHEBI:15378"/>
        <dbReference type="ChEBI" id="CHEBI:17319"/>
        <dbReference type="ChEBI" id="CHEBI:17499"/>
        <dbReference type="ChEBI" id="CHEBI:29917"/>
        <dbReference type="ChEBI" id="CHEBI:57844"/>
        <dbReference type="ChEBI" id="CHEBI:57856"/>
        <dbReference type="ChEBI" id="CHEBI:59789"/>
        <dbReference type="ChEBI" id="CHEBI:64428"/>
        <dbReference type="ChEBI" id="CHEBI:74415"/>
        <dbReference type="ChEBI" id="CHEBI:74417"/>
        <dbReference type="EC" id="2.8.4.3"/>
    </reaction>
</comment>
<comment type="cofactor">
    <cofactor evidence="1">
        <name>[4Fe-4S] cluster</name>
        <dbReference type="ChEBI" id="CHEBI:49883"/>
    </cofactor>
    <text evidence="1">Binds 2 [4Fe-4S] clusters. One cluster is coordinated with 3 cysteines and an exchangeable S-adenosyl-L-methionine.</text>
</comment>
<comment type="subunit">
    <text evidence="1">Monomer.</text>
</comment>
<comment type="subcellular location">
    <subcellularLocation>
        <location evidence="1">Cytoplasm</location>
    </subcellularLocation>
</comment>
<comment type="similarity">
    <text evidence="1">Belongs to the methylthiotransferase family. MiaB subfamily.</text>
</comment>
<evidence type="ECO:0000255" key="1">
    <source>
        <dbReference type="HAMAP-Rule" id="MF_01864"/>
    </source>
</evidence>
<evidence type="ECO:0000255" key="2">
    <source>
        <dbReference type="PROSITE-ProRule" id="PRU01266"/>
    </source>
</evidence>